<name>ATP6_RHOPT</name>
<gene>
    <name evidence="1" type="primary">atpB</name>
    <name type="ordered locus">Rpal_0914</name>
</gene>
<evidence type="ECO:0000255" key="1">
    <source>
        <dbReference type="HAMAP-Rule" id="MF_01393"/>
    </source>
</evidence>
<organism>
    <name type="scientific">Rhodopseudomonas palustris (strain TIE-1)</name>
    <dbReference type="NCBI Taxonomy" id="395960"/>
    <lineage>
        <taxon>Bacteria</taxon>
        <taxon>Pseudomonadati</taxon>
        <taxon>Pseudomonadota</taxon>
        <taxon>Alphaproteobacteria</taxon>
        <taxon>Hyphomicrobiales</taxon>
        <taxon>Nitrobacteraceae</taxon>
        <taxon>Rhodopseudomonas</taxon>
    </lineage>
</organism>
<accession>B3QF37</accession>
<reference key="1">
    <citation type="submission" date="2008-05" db="EMBL/GenBank/DDBJ databases">
        <title>Complete sequence of Rhodopseudomonas palustris TIE-1.</title>
        <authorList>
            <consortium name="US DOE Joint Genome Institute"/>
            <person name="Lucas S."/>
            <person name="Copeland A."/>
            <person name="Lapidus A."/>
            <person name="Glavina del Rio T."/>
            <person name="Dalin E."/>
            <person name="Tice H."/>
            <person name="Pitluck S."/>
            <person name="Chain P."/>
            <person name="Malfatti S."/>
            <person name="Shin M."/>
            <person name="Vergez L."/>
            <person name="Lang D."/>
            <person name="Schmutz J."/>
            <person name="Larimer F."/>
            <person name="Land M."/>
            <person name="Hauser L."/>
            <person name="Kyrpides N."/>
            <person name="Mikhailova N."/>
            <person name="Emerson D."/>
            <person name="Newman D.K."/>
            <person name="Roden E."/>
            <person name="Richardson P."/>
        </authorList>
    </citation>
    <scope>NUCLEOTIDE SEQUENCE [LARGE SCALE GENOMIC DNA]</scope>
    <source>
        <strain>TIE-1</strain>
    </source>
</reference>
<keyword id="KW-0066">ATP synthesis</keyword>
<keyword id="KW-0997">Cell inner membrane</keyword>
<keyword id="KW-1003">Cell membrane</keyword>
<keyword id="KW-0138">CF(0)</keyword>
<keyword id="KW-0375">Hydrogen ion transport</keyword>
<keyword id="KW-0406">Ion transport</keyword>
<keyword id="KW-0472">Membrane</keyword>
<keyword id="KW-0812">Transmembrane</keyword>
<keyword id="KW-1133">Transmembrane helix</keyword>
<keyword id="KW-0813">Transport</keyword>
<protein>
    <recommendedName>
        <fullName evidence="1">ATP synthase subunit a</fullName>
    </recommendedName>
    <alternativeName>
        <fullName evidence="1">ATP synthase F0 sector subunit a</fullName>
    </alternativeName>
    <alternativeName>
        <fullName evidence="1">F-ATPase subunit 6</fullName>
    </alternativeName>
</protein>
<sequence length="248" mass="26951">MAADPIHQFQITKLFTLGHVGGQEIAFTNSSAYMFGTVALIAILMLVPGRQLVPGRLQSIAELSYEFVANMIRSTAGKEGLKFFPLVFSLFMFIAVSNLIGIVPYTFTVSSHLIVTVALALLVFFTVLIYGFSKNGLKFFKLFVPSGVPIYILPLVVFIEVISFFLKPVSHSVRLFANMLAGHIALKVFASFVAMLGALGVVGWFGAVLPLGLTIALTALELLVAFLQAYVFAILTCIYLNDAIHPGH</sequence>
<feature type="chain" id="PRO_0000362421" description="ATP synthase subunit a">
    <location>
        <begin position="1"/>
        <end position="248"/>
    </location>
</feature>
<feature type="transmembrane region" description="Helical" evidence="1">
    <location>
        <begin position="27"/>
        <end position="47"/>
    </location>
</feature>
<feature type="transmembrane region" description="Helical" evidence="1">
    <location>
        <begin position="83"/>
        <end position="103"/>
    </location>
</feature>
<feature type="transmembrane region" description="Helical" evidence="1">
    <location>
        <begin position="113"/>
        <end position="133"/>
    </location>
</feature>
<feature type="transmembrane region" description="Helical" evidence="1">
    <location>
        <begin position="142"/>
        <end position="162"/>
    </location>
</feature>
<feature type="transmembrane region" description="Helical" evidence="1">
    <location>
        <begin position="192"/>
        <end position="212"/>
    </location>
</feature>
<feature type="transmembrane region" description="Helical" evidence="1">
    <location>
        <begin position="215"/>
        <end position="235"/>
    </location>
</feature>
<proteinExistence type="inferred from homology"/>
<comment type="function">
    <text evidence="1">Key component of the proton channel; it plays a direct role in the translocation of protons across the membrane.</text>
</comment>
<comment type="subunit">
    <text evidence="1">F-type ATPases have 2 components, CF(1) - the catalytic core - and CF(0) - the membrane proton channel. CF(1) has five subunits: alpha(3), beta(3), gamma(1), delta(1), epsilon(1). CF(0) has four main subunits: a, b, b' and c.</text>
</comment>
<comment type="subcellular location">
    <subcellularLocation>
        <location evidence="1">Cell inner membrane</location>
        <topology evidence="1">Multi-pass membrane protein</topology>
    </subcellularLocation>
</comment>
<comment type="similarity">
    <text evidence="1">Belongs to the ATPase A chain family.</text>
</comment>
<dbReference type="EMBL" id="CP001096">
    <property type="protein sequence ID" value="ACE99471.1"/>
    <property type="molecule type" value="Genomic_DNA"/>
</dbReference>
<dbReference type="RefSeq" id="WP_011156597.1">
    <property type="nucleotide sequence ID" value="NC_011004.1"/>
</dbReference>
<dbReference type="SMR" id="B3QF37"/>
<dbReference type="KEGG" id="rpt:Rpal_0914"/>
<dbReference type="HOGENOM" id="CLU_041018_0_2_5"/>
<dbReference type="OrthoDB" id="9809130at2"/>
<dbReference type="Proteomes" id="UP000001725">
    <property type="component" value="Chromosome"/>
</dbReference>
<dbReference type="GO" id="GO:0005886">
    <property type="term" value="C:plasma membrane"/>
    <property type="evidence" value="ECO:0007669"/>
    <property type="project" value="UniProtKB-SubCell"/>
</dbReference>
<dbReference type="GO" id="GO:0045259">
    <property type="term" value="C:proton-transporting ATP synthase complex"/>
    <property type="evidence" value="ECO:0007669"/>
    <property type="project" value="UniProtKB-KW"/>
</dbReference>
<dbReference type="GO" id="GO:0046933">
    <property type="term" value="F:proton-transporting ATP synthase activity, rotational mechanism"/>
    <property type="evidence" value="ECO:0007669"/>
    <property type="project" value="UniProtKB-UniRule"/>
</dbReference>
<dbReference type="CDD" id="cd00310">
    <property type="entry name" value="ATP-synt_Fo_a_6"/>
    <property type="match status" value="1"/>
</dbReference>
<dbReference type="FunFam" id="1.20.120.220:FF:000003">
    <property type="entry name" value="ATP synthase subunit a"/>
    <property type="match status" value="1"/>
</dbReference>
<dbReference type="Gene3D" id="1.20.120.220">
    <property type="entry name" value="ATP synthase, F0 complex, subunit A"/>
    <property type="match status" value="1"/>
</dbReference>
<dbReference type="HAMAP" id="MF_01393">
    <property type="entry name" value="ATP_synth_a_bact"/>
    <property type="match status" value="1"/>
</dbReference>
<dbReference type="InterPro" id="IPR000568">
    <property type="entry name" value="ATP_synth_F0_asu"/>
</dbReference>
<dbReference type="InterPro" id="IPR023011">
    <property type="entry name" value="ATP_synth_F0_asu_AS"/>
</dbReference>
<dbReference type="InterPro" id="IPR045083">
    <property type="entry name" value="ATP_synth_F0_asu_bact/mt"/>
</dbReference>
<dbReference type="InterPro" id="IPR035908">
    <property type="entry name" value="F0_ATP_A_sf"/>
</dbReference>
<dbReference type="NCBIfam" id="TIGR01131">
    <property type="entry name" value="ATP_synt_6_or_A"/>
    <property type="match status" value="1"/>
</dbReference>
<dbReference type="NCBIfam" id="NF004482">
    <property type="entry name" value="PRK05815.2-4"/>
    <property type="match status" value="1"/>
</dbReference>
<dbReference type="PANTHER" id="PTHR11410">
    <property type="entry name" value="ATP SYNTHASE SUBUNIT A"/>
    <property type="match status" value="1"/>
</dbReference>
<dbReference type="PANTHER" id="PTHR11410:SF0">
    <property type="entry name" value="ATP SYNTHASE SUBUNIT A"/>
    <property type="match status" value="1"/>
</dbReference>
<dbReference type="Pfam" id="PF00119">
    <property type="entry name" value="ATP-synt_A"/>
    <property type="match status" value="1"/>
</dbReference>
<dbReference type="PRINTS" id="PR00123">
    <property type="entry name" value="ATPASEA"/>
</dbReference>
<dbReference type="SUPFAM" id="SSF81336">
    <property type="entry name" value="F1F0 ATP synthase subunit A"/>
    <property type="match status" value="1"/>
</dbReference>
<dbReference type="PROSITE" id="PS00449">
    <property type="entry name" value="ATPASE_A"/>
    <property type="match status" value="1"/>
</dbReference>